<evidence type="ECO:0000255" key="1">
    <source>
        <dbReference type="HAMAP-Rule" id="MF_01227"/>
    </source>
</evidence>
<sequence length="545" mass="60109">MTTRYIFVTGGVVSSLGKGIAAASLAAILEARGLNVTIMKLDPYINVDPGTMSPTQHGEVFVTEDGAETDLDLGHYERFIRTKMNRRNNFTTGRIYEEVLRKERRGDYLGATIQVIPHITNAIKEKVLAGGEGHDVAIVEIGGTVGDIESLPFLESIRQLGVELGRDRTLFMHLTLVPFLGAAGEVKTKPTQHSVKELRSIGIAPDVLVCRGDRAIPANEKAKISLFCNVEERAVISLKDVDSIYKIPALLRSQGLDDLVVKRFGLECREADLSEWENVIYQEANPNGEVVIGMVGKYIELPDAYKSVNEALKHAGLKNRVSVTIKYIDSQTVEAKGEEVLQGLDGILVPGGFGERGVEGKILAAKFARENNLPYFGICLGMQVALIEFARNVAGMADAHSTEFNKETPFPVVGLITEWIDEEGNVEQRHEASDLGGTMRLGAQLCHLLDGSKAAQAYKGNSCVERHRHRYEVNNKYRERLEQAGMIFSGLSSDRKLVEMIELKDHPWFVAGQFHPEFTSTPRDGHPLFEGFIAAASAHQKRDLK</sequence>
<keyword id="KW-0067">ATP-binding</keyword>
<keyword id="KW-0315">Glutamine amidotransferase</keyword>
<keyword id="KW-0436">Ligase</keyword>
<keyword id="KW-0460">Magnesium</keyword>
<keyword id="KW-0479">Metal-binding</keyword>
<keyword id="KW-0547">Nucleotide-binding</keyword>
<keyword id="KW-0665">Pyrimidine biosynthesis</keyword>
<dbReference type="EC" id="6.3.4.2" evidence="1"/>
<dbReference type="EMBL" id="CP000891">
    <property type="protein sequence ID" value="ABX50442.1"/>
    <property type="molecule type" value="Genomic_DNA"/>
</dbReference>
<dbReference type="RefSeq" id="WP_006082617.1">
    <property type="nucleotide sequence ID" value="NC_009997.1"/>
</dbReference>
<dbReference type="SMR" id="A9KYH1"/>
<dbReference type="KEGG" id="sbn:Sbal195_3280"/>
<dbReference type="HOGENOM" id="CLU_011675_5_0_6"/>
<dbReference type="UniPathway" id="UPA00159">
    <property type="reaction ID" value="UER00277"/>
</dbReference>
<dbReference type="Proteomes" id="UP000000770">
    <property type="component" value="Chromosome"/>
</dbReference>
<dbReference type="GO" id="GO:0005829">
    <property type="term" value="C:cytosol"/>
    <property type="evidence" value="ECO:0007669"/>
    <property type="project" value="TreeGrafter"/>
</dbReference>
<dbReference type="GO" id="GO:0005524">
    <property type="term" value="F:ATP binding"/>
    <property type="evidence" value="ECO:0007669"/>
    <property type="project" value="UniProtKB-KW"/>
</dbReference>
<dbReference type="GO" id="GO:0003883">
    <property type="term" value="F:CTP synthase activity"/>
    <property type="evidence" value="ECO:0007669"/>
    <property type="project" value="UniProtKB-UniRule"/>
</dbReference>
<dbReference type="GO" id="GO:0004359">
    <property type="term" value="F:glutaminase activity"/>
    <property type="evidence" value="ECO:0007669"/>
    <property type="project" value="RHEA"/>
</dbReference>
<dbReference type="GO" id="GO:0042802">
    <property type="term" value="F:identical protein binding"/>
    <property type="evidence" value="ECO:0007669"/>
    <property type="project" value="TreeGrafter"/>
</dbReference>
<dbReference type="GO" id="GO:0046872">
    <property type="term" value="F:metal ion binding"/>
    <property type="evidence" value="ECO:0007669"/>
    <property type="project" value="UniProtKB-KW"/>
</dbReference>
<dbReference type="GO" id="GO:0044210">
    <property type="term" value="P:'de novo' CTP biosynthetic process"/>
    <property type="evidence" value="ECO:0007669"/>
    <property type="project" value="UniProtKB-UniRule"/>
</dbReference>
<dbReference type="GO" id="GO:0019856">
    <property type="term" value="P:pyrimidine nucleobase biosynthetic process"/>
    <property type="evidence" value="ECO:0007669"/>
    <property type="project" value="TreeGrafter"/>
</dbReference>
<dbReference type="CDD" id="cd03113">
    <property type="entry name" value="CTPS_N"/>
    <property type="match status" value="1"/>
</dbReference>
<dbReference type="CDD" id="cd01746">
    <property type="entry name" value="GATase1_CTP_Synthase"/>
    <property type="match status" value="1"/>
</dbReference>
<dbReference type="FunFam" id="3.40.50.300:FF:000009">
    <property type="entry name" value="CTP synthase"/>
    <property type="match status" value="1"/>
</dbReference>
<dbReference type="FunFam" id="3.40.50.880:FF:000002">
    <property type="entry name" value="CTP synthase"/>
    <property type="match status" value="1"/>
</dbReference>
<dbReference type="Gene3D" id="3.40.50.880">
    <property type="match status" value="1"/>
</dbReference>
<dbReference type="Gene3D" id="3.40.50.300">
    <property type="entry name" value="P-loop containing nucleotide triphosphate hydrolases"/>
    <property type="match status" value="1"/>
</dbReference>
<dbReference type="HAMAP" id="MF_01227">
    <property type="entry name" value="PyrG"/>
    <property type="match status" value="1"/>
</dbReference>
<dbReference type="InterPro" id="IPR029062">
    <property type="entry name" value="Class_I_gatase-like"/>
</dbReference>
<dbReference type="InterPro" id="IPR004468">
    <property type="entry name" value="CTP_synthase"/>
</dbReference>
<dbReference type="InterPro" id="IPR017456">
    <property type="entry name" value="CTP_synthase_N"/>
</dbReference>
<dbReference type="InterPro" id="IPR017926">
    <property type="entry name" value="GATASE"/>
</dbReference>
<dbReference type="InterPro" id="IPR033828">
    <property type="entry name" value="GATase1_CTP_Synthase"/>
</dbReference>
<dbReference type="InterPro" id="IPR027417">
    <property type="entry name" value="P-loop_NTPase"/>
</dbReference>
<dbReference type="NCBIfam" id="NF003792">
    <property type="entry name" value="PRK05380.1"/>
    <property type="match status" value="1"/>
</dbReference>
<dbReference type="NCBIfam" id="TIGR00337">
    <property type="entry name" value="PyrG"/>
    <property type="match status" value="1"/>
</dbReference>
<dbReference type="PANTHER" id="PTHR11550">
    <property type="entry name" value="CTP SYNTHASE"/>
    <property type="match status" value="1"/>
</dbReference>
<dbReference type="PANTHER" id="PTHR11550:SF0">
    <property type="entry name" value="CTP SYNTHASE-RELATED"/>
    <property type="match status" value="1"/>
</dbReference>
<dbReference type="Pfam" id="PF06418">
    <property type="entry name" value="CTP_synth_N"/>
    <property type="match status" value="1"/>
</dbReference>
<dbReference type="Pfam" id="PF00117">
    <property type="entry name" value="GATase"/>
    <property type="match status" value="1"/>
</dbReference>
<dbReference type="SUPFAM" id="SSF52317">
    <property type="entry name" value="Class I glutamine amidotransferase-like"/>
    <property type="match status" value="1"/>
</dbReference>
<dbReference type="SUPFAM" id="SSF52540">
    <property type="entry name" value="P-loop containing nucleoside triphosphate hydrolases"/>
    <property type="match status" value="1"/>
</dbReference>
<dbReference type="PROSITE" id="PS51273">
    <property type="entry name" value="GATASE_TYPE_1"/>
    <property type="match status" value="1"/>
</dbReference>
<proteinExistence type="inferred from homology"/>
<reference key="1">
    <citation type="submission" date="2007-11" db="EMBL/GenBank/DDBJ databases">
        <title>Complete sequence of chromosome of Shewanella baltica OS195.</title>
        <authorList>
            <consortium name="US DOE Joint Genome Institute"/>
            <person name="Copeland A."/>
            <person name="Lucas S."/>
            <person name="Lapidus A."/>
            <person name="Barry K."/>
            <person name="Glavina del Rio T."/>
            <person name="Dalin E."/>
            <person name="Tice H."/>
            <person name="Pitluck S."/>
            <person name="Chain P."/>
            <person name="Malfatti S."/>
            <person name="Shin M."/>
            <person name="Vergez L."/>
            <person name="Schmutz J."/>
            <person name="Larimer F."/>
            <person name="Land M."/>
            <person name="Hauser L."/>
            <person name="Kyrpides N."/>
            <person name="Kim E."/>
            <person name="Brettar I."/>
            <person name="Rodrigues J."/>
            <person name="Konstantinidis K."/>
            <person name="Klappenbach J."/>
            <person name="Hofle M."/>
            <person name="Tiedje J."/>
            <person name="Richardson P."/>
        </authorList>
    </citation>
    <scope>NUCLEOTIDE SEQUENCE [LARGE SCALE GENOMIC DNA]</scope>
    <source>
        <strain>OS195</strain>
    </source>
</reference>
<accession>A9KYH1</accession>
<gene>
    <name evidence="1" type="primary">pyrG</name>
    <name type="ordered locus">Sbal195_3280</name>
</gene>
<feature type="chain" id="PRO_1000139570" description="CTP synthase">
    <location>
        <begin position="1"/>
        <end position="545"/>
    </location>
</feature>
<feature type="domain" description="Glutamine amidotransferase type-1" evidence="1">
    <location>
        <begin position="291"/>
        <end position="542"/>
    </location>
</feature>
<feature type="region of interest" description="Amidoligase domain" evidence="1">
    <location>
        <begin position="1"/>
        <end position="266"/>
    </location>
</feature>
<feature type="active site" description="Nucleophile; for glutamine hydrolysis" evidence="1">
    <location>
        <position position="379"/>
    </location>
</feature>
<feature type="active site" evidence="1">
    <location>
        <position position="515"/>
    </location>
</feature>
<feature type="active site" evidence="1">
    <location>
        <position position="517"/>
    </location>
</feature>
<feature type="binding site" evidence="1">
    <location>
        <position position="14"/>
    </location>
    <ligand>
        <name>CTP</name>
        <dbReference type="ChEBI" id="CHEBI:37563"/>
        <note>allosteric inhibitor</note>
    </ligand>
</feature>
<feature type="binding site" evidence="1">
    <location>
        <position position="14"/>
    </location>
    <ligand>
        <name>UTP</name>
        <dbReference type="ChEBI" id="CHEBI:46398"/>
    </ligand>
</feature>
<feature type="binding site" evidence="1">
    <location>
        <begin position="15"/>
        <end position="20"/>
    </location>
    <ligand>
        <name>ATP</name>
        <dbReference type="ChEBI" id="CHEBI:30616"/>
    </ligand>
</feature>
<feature type="binding site" evidence="1">
    <location>
        <position position="72"/>
    </location>
    <ligand>
        <name>ATP</name>
        <dbReference type="ChEBI" id="CHEBI:30616"/>
    </ligand>
</feature>
<feature type="binding site" evidence="1">
    <location>
        <position position="72"/>
    </location>
    <ligand>
        <name>Mg(2+)</name>
        <dbReference type="ChEBI" id="CHEBI:18420"/>
    </ligand>
</feature>
<feature type="binding site" evidence="1">
    <location>
        <position position="140"/>
    </location>
    <ligand>
        <name>Mg(2+)</name>
        <dbReference type="ChEBI" id="CHEBI:18420"/>
    </ligand>
</feature>
<feature type="binding site" evidence="1">
    <location>
        <begin position="147"/>
        <end position="149"/>
    </location>
    <ligand>
        <name>CTP</name>
        <dbReference type="ChEBI" id="CHEBI:37563"/>
        <note>allosteric inhibitor</note>
    </ligand>
</feature>
<feature type="binding site" evidence="1">
    <location>
        <begin position="187"/>
        <end position="192"/>
    </location>
    <ligand>
        <name>CTP</name>
        <dbReference type="ChEBI" id="CHEBI:37563"/>
        <note>allosteric inhibitor</note>
    </ligand>
</feature>
<feature type="binding site" evidence="1">
    <location>
        <begin position="187"/>
        <end position="192"/>
    </location>
    <ligand>
        <name>UTP</name>
        <dbReference type="ChEBI" id="CHEBI:46398"/>
    </ligand>
</feature>
<feature type="binding site" evidence="1">
    <location>
        <position position="223"/>
    </location>
    <ligand>
        <name>CTP</name>
        <dbReference type="ChEBI" id="CHEBI:37563"/>
        <note>allosteric inhibitor</note>
    </ligand>
</feature>
<feature type="binding site" evidence="1">
    <location>
        <position position="223"/>
    </location>
    <ligand>
        <name>UTP</name>
        <dbReference type="ChEBI" id="CHEBI:46398"/>
    </ligand>
</feature>
<feature type="binding site" evidence="1">
    <location>
        <begin position="239"/>
        <end position="241"/>
    </location>
    <ligand>
        <name>ATP</name>
        <dbReference type="ChEBI" id="CHEBI:30616"/>
    </ligand>
</feature>
<feature type="binding site" evidence="1">
    <location>
        <position position="352"/>
    </location>
    <ligand>
        <name>L-glutamine</name>
        <dbReference type="ChEBI" id="CHEBI:58359"/>
    </ligand>
</feature>
<feature type="binding site" evidence="1">
    <location>
        <begin position="380"/>
        <end position="383"/>
    </location>
    <ligand>
        <name>L-glutamine</name>
        <dbReference type="ChEBI" id="CHEBI:58359"/>
    </ligand>
</feature>
<feature type="binding site" evidence="1">
    <location>
        <position position="403"/>
    </location>
    <ligand>
        <name>L-glutamine</name>
        <dbReference type="ChEBI" id="CHEBI:58359"/>
    </ligand>
</feature>
<feature type="binding site" evidence="1">
    <location>
        <position position="470"/>
    </location>
    <ligand>
        <name>L-glutamine</name>
        <dbReference type="ChEBI" id="CHEBI:58359"/>
    </ligand>
</feature>
<comment type="function">
    <text evidence="1">Catalyzes the ATP-dependent amination of UTP to CTP with either L-glutamine or ammonia as the source of nitrogen. Regulates intracellular CTP levels through interactions with the four ribonucleotide triphosphates.</text>
</comment>
<comment type="catalytic activity">
    <reaction evidence="1">
        <text>UTP + L-glutamine + ATP + H2O = CTP + L-glutamate + ADP + phosphate + 2 H(+)</text>
        <dbReference type="Rhea" id="RHEA:26426"/>
        <dbReference type="ChEBI" id="CHEBI:15377"/>
        <dbReference type="ChEBI" id="CHEBI:15378"/>
        <dbReference type="ChEBI" id="CHEBI:29985"/>
        <dbReference type="ChEBI" id="CHEBI:30616"/>
        <dbReference type="ChEBI" id="CHEBI:37563"/>
        <dbReference type="ChEBI" id="CHEBI:43474"/>
        <dbReference type="ChEBI" id="CHEBI:46398"/>
        <dbReference type="ChEBI" id="CHEBI:58359"/>
        <dbReference type="ChEBI" id="CHEBI:456216"/>
        <dbReference type="EC" id="6.3.4.2"/>
    </reaction>
</comment>
<comment type="catalytic activity">
    <reaction evidence="1">
        <text>L-glutamine + H2O = L-glutamate + NH4(+)</text>
        <dbReference type="Rhea" id="RHEA:15889"/>
        <dbReference type="ChEBI" id="CHEBI:15377"/>
        <dbReference type="ChEBI" id="CHEBI:28938"/>
        <dbReference type="ChEBI" id="CHEBI:29985"/>
        <dbReference type="ChEBI" id="CHEBI:58359"/>
    </reaction>
</comment>
<comment type="catalytic activity">
    <reaction evidence="1">
        <text>UTP + NH4(+) + ATP = CTP + ADP + phosphate + 2 H(+)</text>
        <dbReference type="Rhea" id="RHEA:16597"/>
        <dbReference type="ChEBI" id="CHEBI:15378"/>
        <dbReference type="ChEBI" id="CHEBI:28938"/>
        <dbReference type="ChEBI" id="CHEBI:30616"/>
        <dbReference type="ChEBI" id="CHEBI:37563"/>
        <dbReference type="ChEBI" id="CHEBI:43474"/>
        <dbReference type="ChEBI" id="CHEBI:46398"/>
        <dbReference type="ChEBI" id="CHEBI:456216"/>
    </reaction>
</comment>
<comment type="activity regulation">
    <text evidence="1">Allosterically activated by GTP, when glutamine is the substrate; GTP has no effect on the reaction when ammonia is the substrate. The allosteric effector GTP functions by stabilizing the protein conformation that binds the tetrahedral intermediate(s) formed during glutamine hydrolysis. Inhibited by the product CTP, via allosteric rather than competitive inhibition.</text>
</comment>
<comment type="pathway">
    <text evidence="1">Pyrimidine metabolism; CTP biosynthesis via de novo pathway; CTP from UDP: step 2/2.</text>
</comment>
<comment type="subunit">
    <text evidence="1">Homotetramer.</text>
</comment>
<comment type="miscellaneous">
    <text evidence="1">CTPSs have evolved a hybrid strategy for distinguishing between UTP and CTP. The overlapping regions of the product feedback inhibitory and substrate sites recognize a common feature in both compounds, the triphosphate moiety. To differentiate isosteric substrate and product pyrimidine rings, an additional pocket far from the expected kinase/ligase catalytic site, specifically recognizes the cytosine and ribose portions of the product inhibitor.</text>
</comment>
<comment type="similarity">
    <text evidence="1">Belongs to the CTP synthase family.</text>
</comment>
<protein>
    <recommendedName>
        <fullName evidence="1">CTP synthase</fullName>
        <ecNumber evidence="1">6.3.4.2</ecNumber>
    </recommendedName>
    <alternativeName>
        <fullName evidence="1">Cytidine 5'-triphosphate synthase</fullName>
    </alternativeName>
    <alternativeName>
        <fullName evidence="1">Cytidine triphosphate synthetase</fullName>
        <shortName evidence="1">CTP synthetase</shortName>
        <shortName evidence="1">CTPS</shortName>
    </alternativeName>
    <alternativeName>
        <fullName evidence="1">UTP--ammonia ligase</fullName>
    </alternativeName>
</protein>
<name>PYRG_SHEB9</name>
<organism>
    <name type="scientific">Shewanella baltica (strain OS195)</name>
    <dbReference type="NCBI Taxonomy" id="399599"/>
    <lineage>
        <taxon>Bacteria</taxon>
        <taxon>Pseudomonadati</taxon>
        <taxon>Pseudomonadota</taxon>
        <taxon>Gammaproteobacteria</taxon>
        <taxon>Alteromonadales</taxon>
        <taxon>Shewanellaceae</taxon>
        <taxon>Shewanella</taxon>
    </lineage>
</organism>